<keyword id="KW-0143">Chaperone</keyword>
<keyword id="KW-0963">Cytoplasm</keyword>
<keyword id="KW-0690">Ribosome biogenesis</keyword>
<keyword id="KW-0698">rRNA processing</keyword>
<evidence type="ECO:0000255" key="1">
    <source>
        <dbReference type="HAMAP-Rule" id="MF_00014"/>
    </source>
</evidence>
<gene>
    <name evidence="1" type="primary">rimM</name>
    <name type="ordered locus">RBAM_015850</name>
</gene>
<accession>A7Z4M2</accession>
<comment type="function">
    <text evidence="1">An accessory protein needed during the final step in the assembly of 30S ribosomal subunit, possibly for assembly of the head region. Essential for efficient processing of 16S rRNA. May be needed both before and after RbfA during the maturation of 16S rRNA. It has affinity for free ribosomal 30S subunits but not for 70S ribosomes.</text>
</comment>
<comment type="subunit">
    <text evidence="1">Binds ribosomal protein uS19.</text>
</comment>
<comment type="subcellular location">
    <subcellularLocation>
        <location evidence="1">Cytoplasm</location>
    </subcellularLocation>
</comment>
<comment type="domain">
    <text evidence="1">The PRC barrel domain binds ribosomal protein uS19.</text>
</comment>
<comment type="similarity">
    <text evidence="1">Belongs to the RimM family.</text>
</comment>
<proteinExistence type="inferred from homology"/>
<organism>
    <name type="scientific">Bacillus velezensis (strain DSM 23117 / BGSC 10A6 / LMG 26770 / FZB42)</name>
    <name type="common">Bacillus amyloliquefaciens subsp. plantarum</name>
    <dbReference type="NCBI Taxonomy" id="326423"/>
    <lineage>
        <taxon>Bacteria</taxon>
        <taxon>Bacillati</taxon>
        <taxon>Bacillota</taxon>
        <taxon>Bacilli</taxon>
        <taxon>Bacillales</taxon>
        <taxon>Bacillaceae</taxon>
        <taxon>Bacillus</taxon>
        <taxon>Bacillus amyloliquefaciens group</taxon>
    </lineage>
</organism>
<dbReference type="EMBL" id="CP000560">
    <property type="protein sequence ID" value="ABS73948.1"/>
    <property type="molecule type" value="Genomic_DNA"/>
</dbReference>
<dbReference type="RefSeq" id="WP_003154290.1">
    <property type="nucleotide sequence ID" value="NC_009725.2"/>
</dbReference>
<dbReference type="SMR" id="A7Z4M2"/>
<dbReference type="GeneID" id="93080718"/>
<dbReference type="KEGG" id="bay:RBAM_015850"/>
<dbReference type="HOGENOM" id="CLU_077636_3_1_9"/>
<dbReference type="Proteomes" id="UP000001120">
    <property type="component" value="Chromosome"/>
</dbReference>
<dbReference type="GO" id="GO:0005737">
    <property type="term" value="C:cytoplasm"/>
    <property type="evidence" value="ECO:0007669"/>
    <property type="project" value="UniProtKB-SubCell"/>
</dbReference>
<dbReference type="GO" id="GO:0005840">
    <property type="term" value="C:ribosome"/>
    <property type="evidence" value="ECO:0007669"/>
    <property type="project" value="InterPro"/>
</dbReference>
<dbReference type="GO" id="GO:0043022">
    <property type="term" value="F:ribosome binding"/>
    <property type="evidence" value="ECO:0007669"/>
    <property type="project" value="InterPro"/>
</dbReference>
<dbReference type="GO" id="GO:0042274">
    <property type="term" value="P:ribosomal small subunit biogenesis"/>
    <property type="evidence" value="ECO:0007669"/>
    <property type="project" value="UniProtKB-UniRule"/>
</dbReference>
<dbReference type="GO" id="GO:0006364">
    <property type="term" value="P:rRNA processing"/>
    <property type="evidence" value="ECO:0007669"/>
    <property type="project" value="UniProtKB-UniRule"/>
</dbReference>
<dbReference type="Gene3D" id="2.30.30.240">
    <property type="entry name" value="PRC-barrel domain"/>
    <property type="match status" value="1"/>
</dbReference>
<dbReference type="Gene3D" id="2.40.30.60">
    <property type="entry name" value="RimM"/>
    <property type="match status" value="1"/>
</dbReference>
<dbReference type="HAMAP" id="MF_00014">
    <property type="entry name" value="Ribosome_mat_RimM"/>
    <property type="match status" value="1"/>
</dbReference>
<dbReference type="InterPro" id="IPR027275">
    <property type="entry name" value="PRC-brl_dom"/>
</dbReference>
<dbReference type="InterPro" id="IPR011033">
    <property type="entry name" value="PRC_barrel-like_sf"/>
</dbReference>
<dbReference type="InterPro" id="IPR011961">
    <property type="entry name" value="RimM"/>
</dbReference>
<dbReference type="InterPro" id="IPR002676">
    <property type="entry name" value="RimM_N"/>
</dbReference>
<dbReference type="InterPro" id="IPR036976">
    <property type="entry name" value="RimM_N_sf"/>
</dbReference>
<dbReference type="InterPro" id="IPR009000">
    <property type="entry name" value="Transl_B-barrel_sf"/>
</dbReference>
<dbReference type="NCBIfam" id="TIGR02273">
    <property type="entry name" value="16S_RimM"/>
    <property type="match status" value="1"/>
</dbReference>
<dbReference type="PANTHER" id="PTHR33692">
    <property type="entry name" value="RIBOSOME MATURATION FACTOR RIMM"/>
    <property type="match status" value="1"/>
</dbReference>
<dbReference type="PANTHER" id="PTHR33692:SF1">
    <property type="entry name" value="RIBOSOME MATURATION FACTOR RIMM"/>
    <property type="match status" value="1"/>
</dbReference>
<dbReference type="Pfam" id="PF05239">
    <property type="entry name" value="PRC"/>
    <property type="match status" value="1"/>
</dbReference>
<dbReference type="Pfam" id="PF01782">
    <property type="entry name" value="RimM"/>
    <property type="match status" value="1"/>
</dbReference>
<dbReference type="SUPFAM" id="SSF50346">
    <property type="entry name" value="PRC-barrel domain"/>
    <property type="match status" value="1"/>
</dbReference>
<dbReference type="SUPFAM" id="SSF50447">
    <property type="entry name" value="Translation proteins"/>
    <property type="match status" value="1"/>
</dbReference>
<feature type="chain" id="PRO_1000001151" description="Ribosome maturation factor RimM">
    <location>
        <begin position="1"/>
        <end position="174"/>
    </location>
</feature>
<feature type="domain" description="PRC barrel" evidence="1">
    <location>
        <begin position="98"/>
        <end position="171"/>
    </location>
</feature>
<reference key="1">
    <citation type="journal article" date="2007" name="Nat. Biotechnol.">
        <title>Comparative analysis of the complete genome sequence of the plant growth-promoting bacterium Bacillus amyloliquefaciens FZB42.</title>
        <authorList>
            <person name="Chen X.H."/>
            <person name="Koumoutsi A."/>
            <person name="Scholz R."/>
            <person name="Eisenreich A."/>
            <person name="Schneider K."/>
            <person name="Heinemeyer I."/>
            <person name="Morgenstern B."/>
            <person name="Voss B."/>
            <person name="Hess W.R."/>
            <person name="Reva O."/>
            <person name="Junge H."/>
            <person name="Voigt B."/>
            <person name="Jungblut P.R."/>
            <person name="Vater J."/>
            <person name="Suessmuth R."/>
            <person name="Liesegang H."/>
            <person name="Strittmatter A."/>
            <person name="Gottschalk G."/>
            <person name="Borriss R."/>
        </authorList>
    </citation>
    <scope>NUCLEOTIDE SEQUENCE [LARGE SCALE GENOMIC DNA]</scope>
    <source>
        <strain>DSM 23117 / BGSC 10A6 / LMG 26770 / FZB42</strain>
    </source>
</reference>
<sequence>MTNRWFNVGKIVNTHGIKGEVRVISKTDFAEERYKPGNTLYLFAEGAAEPIKVTVSAHRLHKQFHLLQFKEMPSLNEVEHLRNMVIKVPEEDLGELEEDEFYFHEIIGCEVVSEDGELIGTVKEILTPGANDVWVVARKGKKDALIPYIASVVKDININEKKIKIHVMEGLIDE</sequence>
<protein>
    <recommendedName>
        <fullName evidence="1">Ribosome maturation factor RimM</fullName>
    </recommendedName>
</protein>
<name>RIMM_BACVZ</name>